<gene>
    <name evidence="1" type="primary">rpmF</name>
    <name type="ordered locus">PGN_0188</name>
</gene>
<reference key="1">
    <citation type="journal article" date="2008" name="DNA Res.">
        <title>Determination of the genome sequence of Porphyromonas gingivalis strain ATCC 33277 and genomic comparison with strain W83 revealed extensive genome rearrangements in P. gingivalis.</title>
        <authorList>
            <person name="Naito M."/>
            <person name="Hirakawa H."/>
            <person name="Yamashita A."/>
            <person name="Ohara N."/>
            <person name="Shoji M."/>
            <person name="Yukitake H."/>
            <person name="Nakayama K."/>
            <person name="Toh H."/>
            <person name="Yoshimura F."/>
            <person name="Kuhara S."/>
            <person name="Hattori M."/>
            <person name="Hayashi T."/>
            <person name="Nakayama K."/>
        </authorList>
    </citation>
    <scope>NUCLEOTIDE SEQUENCE [LARGE SCALE GENOMIC DNA]</scope>
    <source>
        <strain>ATCC 33277 / DSM 20709 / CIP 103683 / JCM 12257 / NCTC 11834 / 2561</strain>
    </source>
</reference>
<accession>B2RH62</accession>
<feature type="chain" id="PRO_1000120157" description="Large ribosomal subunit protein bL32">
    <location>
        <begin position="1"/>
        <end position="61"/>
    </location>
</feature>
<feature type="region of interest" description="Disordered" evidence="2">
    <location>
        <begin position="1"/>
        <end position="20"/>
    </location>
</feature>
<feature type="compositionally biased region" description="Basic residues" evidence="2">
    <location>
        <begin position="1"/>
        <end position="19"/>
    </location>
</feature>
<dbReference type="EMBL" id="AP009380">
    <property type="protein sequence ID" value="BAG32707.1"/>
    <property type="molecule type" value="Genomic_DNA"/>
</dbReference>
<dbReference type="RefSeq" id="WP_010956508.1">
    <property type="nucleotide sequence ID" value="NZ_CP025930.1"/>
</dbReference>
<dbReference type="SMR" id="B2RH62"/>
<dbReference type="GeneID" id="31477326"/>
<dbReference type="KEGG" id="pgn:PGN_0188"/>
<dbReference type="eggNOG" id="COG0333">
    <property type="taxonomic scope" value="Bacteria"/>
</dbReference>
<dbReference type="HOGENOM" id="CLU_129084_1_3_10"/>
<dbReference type="OrthoDB" id="9812874at2"/>
<dbReference type="BioCyc" id="PGIN431947:G1G2V-204-MONOMER"/>
<dbReference type="Proteomes" id="UP000008842">
    <property type="component" value="Chromosome"/>
</dbReference>
<dbReference type="GO" id="GO:0015934">
    <property type="term" value="C:large ribosomal subunit"/>
    <property type="evidence" value="ECO:0007669"/>
    <property type="project" value="InterPro"/>
</dbReference>
<dbReference type="GO" id="GO:0003735">
    <property type="term" value="F:structural constituent of ribosome"/>
    <property type="evidence" value="ECO:0007669"/>
    <property type="project" value="InterPro"/>
</dbReference>
<dbReference type="GO" id="GO:0006412">
    <property type="term" value="P:translation"/>
    <property type="evidence" value="ECO:0007669"/>
    <property type="project" value="UniProtKB-UniRule"/>
</dbReference>
<dbReference type="HAMAP" id="MF_00340">
    <property type="entry name" value="Ribosomal_bL32"/>
    <property type="match status" value="1"/>
</dbReference>
<dbReference type="InterPro" id="IPR002677">
    <property type="entry name" value="Ribosomal_bL32"/>
</dbReference>
<dbReference type="InterPro" id="IPR044957">
    <property type="entry name" value="Ribosomal_bL32_bact"/>
</dbReference>
<dbReference type="InterPro" id="IPR011332">
    <property type="entry name" value="Ribosomal_zn-bd"/>
</dbReference>
<dbReference type="NCBIfam" id="TIGR01031">
    <property type="entry name" value="rpmF_bact"/>
    <property type="match status" value="1"/>
</dbReference>
<dbReference type="PANTHER" id="PTHR35534">
    <property type="entry name" value="50S RIBOSOMAL PROTEIN L32"/>
    <property type="match status" value="1"/>
</dbReference>
<dbReference type="PANTHER" id="PTHR35534:SF1">
    <property type="entry name" value="LARGE RIBOSOMAL SUBUNIT PROTEIN BL32"/>
    <property type="match status" value="1"/>
</dbReference>
<dbReference type="Pfam" id="PF01783">
    <property type="entry name" value="Ribosomal_L32p"/>
    <property type="match status" value="1"/>
</dbReference>
<dbReference type="SUPFAM" id="SSF57829">
    <property type="entry name" value="Zn-binding ribosomal proteins"/>
    <property type="match status" value="1"/>
</dbReference>
<organism>
    <name type="scientific">Porphyromonas gingivalis (strain ATCC 33277 / DSM 20709 / CIP 103683 / JCM 12257 / NCTC 11834 / 2561)</name>
    <dbReference type="NCBI Taxonomy" id="431947"/>
    <lineage>
        <taxon>Bacteria</taxon>
        <taxon>Pseudomonadati</taxon>
        <taxon>Bacteroidota</taxon>
        <taxon>Bacteroidia</taxon>
        <taxon>Bacteroidales</taxon>
        <taxon>Porphyromonadaceae</taxon>
        <taxon>Porphyromonas</taxon>
    </lineage>
</organism>
<proteinExistence type="inferred from homology"/>
<evidence type="ECO:0000255" key="1">
    <source>
        <dbReference type="HAMAP-Rule" id="MF_00340"/>
    </source>
</evidence>
<evidence type="ECO:0000256" key="2">
    <source>
        <dbReference type="SAM" id="MobiDB-lite"/>
    </source>
</evidence>
<evidence type="ECO:0000305" key="3"/>
<keyword id="KW-0687">Ribonucleoprotein</keyword>
<keyword id="KW-0689">Ribosomal protein</keyword>
<name>RL32_PORG3</name>
<sequence>MAHPKRRQSKTRTAKRRTHDKAVMPTLAKCPNCGAWHIYHTVCGDCGYYRGKLAIEKEVAV</sequence>
<protein>
    <recommendedName>
        <fullName evidence="1">Large ribosomal subunit protein bL32</fullName>
    </recommendedName>
    <alternativeName>
        <fullName evidence="3">50S ribosomal protein L32</fullName>
    </alternativeName>
</protein>
<comment type="similarity">
    <text evidence="1">Belongs to the bacterial ribosomal protein bL32 family.</text>
</comment>